<keyword id="KW-0963">Cytoplasm</keyword>
<keyword id="KW-0520">NAD</keyword>
<keyword id="KW-0560">Oxidoreductase</keyword>
<keyword id="KW-0664">Pyridoxine biosynthesis</keyword>
<accession>Q1I7B3</accession>
<evidence type="ECO:0000255" key="1">
    <source>
        <dbReference type="HAMAP-Rule" id="MF_01825"/>
    </source>
</evidence>
<protein>
    <recommendedName>
        <fullName evidence="1">Erythronate-4-phosphate dehydrogenase</fullName>
        <ecNumber evidence="1">1.1.1.290</ecNumber>
    </recommendedName>
</protein>
<reference key="1">
    <citation type="journal article" date="2006" name="Nat. Biotechnol.">
        <title>Complete genome sequence of the entomopathogenic and metabolically versatile soil bacterium Pseudomonas entomophila.</title>
        <authorList>
            <person name="Vodovar N."/>
            <person name="Vallenet D."/>
            <person name="Cruveiller S."/>
            <person name="Rouy Z."/>
            <person name="Barbe V."/>
            <person name="Acosta C."/>
            <person name="Cattolico L."/>
            <person name="Jubin C."/>
            <person name="Lajus A."/>
            <person name="Segurens B."/>
            <person name="Vacherie B."/>
            <person name="Wincker P."/>
            <person name="Weissenbach J."/>
            <person name="Lemaitre B."/>
            <person name="Medigue C."/>
            <person name="Boccard F."/>
        </authorList>
    </citation>
    <scope>NUCLEOTIDE SEQUENCE [LARGE SCALE GENOMIC DNA]</scope>
    <source>
        <strain>L48</strain>
    </source>
</reference>
<comment type="function">
    <text evidence="1">Catalyzes the oxidation of erythronate-4-phosphate to 3-hydroxy-2-oxo-4-phosphonooxybutanoate.</text>
</comment>
<comment type="catalytic activity">
    <reaction evidence="1">
        <text>4-phospho-D-erythronate + NAD(+) = (R)-3-hydroxy-2-oxo-4-phosphooxybutanoate + NADH + H(+)</text>
        <dbReference type="Rhea" id="RHEA:18829"/>
        <dbReference type="ChEBI" id="CHEBI:15378"/>
        <dbReference type="ChEBI" id="CHEBI:57540"/>
        <dbReference type="ChEBI" id="CHEBI:57945"/>
        <dbReference type="ChEBI" id="CHEBI:58538"/>
        <dbReference type="ChEBI" id="CHEBI:58766"/>
        <dbReference type="EC" id="1.1.1.290"/>
    </reaction>
</comment>
<comment type="pathway">
    <text evidence="1">Cofactor biosynthesis; pyridoxine 5'-phosphate biosynthesis; pyridoxine 5'-phosphate from D-erythrose 4-phosphate: step 2/5.</text>
</comment>
<comment type="subunit">
    <text evidence="1">Homodimer.</text>
</comment>
<comment type="subcellular location">
    <subcellularLocation>
        <location evidence="1">Cytoplasm</location>
    </subcellularLocation>
</comment>
<comment type="similarity">
    <text evidence="1">Belongs to the D-isomer specific 2-hydroxyacid dehydrogenase family. PdxB subfamily.</text>
</comment>
<sequence length="383" mass="41798">MLIVADENIPLLDAFFAGFGEIRRYPGRAIDAASAKDADVLLVRSVTRVDRQLLEGSKVRFVGTCTIGTDHLDLDYFADAGIHWSSAPGCNARGVVDYVLGSLLTLAELEGVDLNRRVYGVVGAGEVGGRLVRVLHGLGWKVLVCDPVREASEGGEFVSLETILAQCDVISLHTPLQRGGEHPTWHLLDQEKLASLRPGAWLINASRGPVVDNVALRELLLDREDVHAVLDVWEGEPQVDLQLADLCTLATPHIAGYSLDGKQRGTAQIYQAFCRWRGEPEQVRLADLLPAHSLARIELDANADPAWALATLCRAVYDPRRDDADFRRSLSDDVAEQRAAFDLLRKHYPVRREIEGLAVGLRGEAPQLAQMVSALGAELVGVA</sequence>
<gene>
    <name evidence="1" type="primary">pdxB</name>
    <name type="ordered locus">PSEEN3753</name>
</gene>
<feature type="chain" id="PRO_0000297451" description="Erythronate-4-phosphate dehydrogenase">
    <location>
        <begin position="1"/>
        <end position="383"/>
    </location>
</feature>
<feature type="active site" evidence="1">
    <location>
        <position position="207"/>
    </location>
</feature>
<feature type="active site" evidence="1">
    <location>
        <position position="236"/>
    </location>
</feature>
<feature type="active site" description="Proton donor" evidence="1">
    <location>
        <position position="253"/>
    </location>
</feature>
<feature type="binding site" evidence="1">
    <location>
        <position position="45"/>
    </location>
    <ligand>
        <name>substrate</name>
    </ligand>
</feature>
<feature type="binding site" evidence="1">
    <location>
        <position position="66"/>
    </location>
    <ligand>
        <name>substrate</name>
    </ligand>
</feature>
<feature type="binding site" evidence="1">
    <location>
        <position position="146"/>
    </location>
    <ligand>
        <name>NAD(+)</name>
        <dbReference type="ChEBI" id="CHEBI:57540"/>
    </ligand>
</feature>
<feature type="binding site" evidence="1">
    <location>
        <position position="174"/>
    </location>
    <ligand>
        <name>NAD(+)</name>
        <dbReference type="ChEBI" id="CHEBI:57540"/>
    </ligand>
</feature>
<feature type="binding site" evidence="1">
    <location>
        <begin position="205"/>
        <end position="207"/>
    </location>
    <ligand>
        <name>NAD(+)</name>
        <dbReference type="ChEBI" id="CHEBI:57540"/>
    </ligand>
</feature>
<feature type="binding site" evidence="1">
    <location>
        <position position="231"/>
    </location>
    <ligand>
        <name>NAD(+)</name>
        <dbReference type="ChEBI" id="CHEBI:57540"/>
    </ligand>
</feature>
<feature type="binding site" evidence="1">
    <location>
        <position position="256"/>
    </location>
    <ligand>
        <name>NAD(+)</name>
        <dbReference type="ChEBI" id="CHEBI:57540"/>
    </ligand>
</feature>
<feature type="binding site" evidence="1">
    <location>
        <position position="257"/>
    </location>
    <ligand>
        <name>substrate</name>
    </ligand>
</feature>
<dbReference type="EC" id="1.1.1.290" evidence="1"/>
<dbReference type="EMBL" id="CT573326">
    <property type="protein sequence ID" value="CAK16469.1"/>
    <property type="molecule type" value="Genomic_DNA"/>
</dbReference>
<dbReference type="RefSeq" id="WP_011534846.1">
    <property type="nucleotide sequence ID" value="NC_008027.1"/>
</dbReference>
<dbReference type="SMR" id="Q1I7B3"/>
<dbReference type="STRING" id="384676.PSEEN3753"/>
<dbReference type="GeneID" id="32806792"/>
<dbReference type="KEGG" id="pen:PSEEN3753"/>
<dbReference type="eggNOG" id="COG0111">
    <property type="taxonomic scope" value="Bacteria"/>
</dbReference>
<dbReference type="HOGENOM" id="CLU_019796_4_0_6"/>
<dbReference type="OrthoDB" id="9770208at2"/>
<dbReference type="UniPathway" id="UPA00244">
    <property type="reaction ID" value="UER00310"/>
</dbReference>
<dbReference type="Proteomes" id="UP000000658">
    <property type="component" value="Chromosome"/>
</dbReference>
<dbReference type="GO" id="GO:0005829">
    <property type="term" value="C:cytosol"/>
    <property type="evidence" value="ECO:0007669"/>
    <property type="project" value="TreeGrafter"/>
</dbReference>
<dbReference type="GO" id="GO:0033711">
    <property type="term" value="F:4-phosphoerythronate dehydrogenase activity"/>
    <property type="evidence" value="ECO:0007669"/>
    <property type="project" value="UniProtKB-EC"/>
</dbReference>
<dbReference type="GO" id="GO:0051287">
    <property type="term" value="F:NAD binding"/>
    <property type="evidence" value="ECO:0007669"/>
    <property type="project" value="InterPro"/>
</dbReference>
<dbReference type="GO" id="GO:0046983">
    <property type="term" value="F:protein dimerization activity"/>
    <property type="evidence" value="ECO:0007669"/>
    <property type="project" value="InterPro"/>
</dbReference>
<dbReference type="GO" id="GO:0036001">
    <property type="term" value="P:'de novo' pyridoxal 5'-phosphate biosynthetic process"/>
    <property type="evidence" value="ECO:0007669"/>
    <property type="project" value="TreeGrafter"/>
</dbReference>
<dbReference type="GO" id="GO:0008615">
    <property type="term" value="P:pyridoxine biosynthetic process"/>
    <property type="evidence" value="ECO:0007669"/>
    <property type="project" value="UniProtKB-UniRule"/>
</dbReference>
<dbReference type="CDD" id="cd12158">
    <property type="entry name" value="ErythrP_dh"/>
    <property type="match status" value="1"/>
</dbReference>
<dbReference type="Gene3D" id="3.30.1370.170">
    <property type="match status" value="1"/>
</dbReference>
<dbReference type="Gene3D" id="3.40.50.720">
    <property type="entry name" value="NAD(P)-binding Rossmann-like Domain"/>
    <property type="match status" value="2"/>
</dbReference>
<dbReference type="HAMAP" id="MF_01825">
    <property type="entry name" value="PdxB"/>
    <property type="match status" value="1"/>
</dbReference>
<dbReference type="InterPro" id="IPR006139">
    <property type="entry name" value="D-isomer_2_OHA_DH_cat_dom"/>
</dbReference>
<dbReference type="InterPro" id="IPR029753">
    <property type="entry name" value="D-isomer_DH_CS"/>
</dbReference>
<dbReference type="InterPro" id="IPR006140">
    <property type="entry name" value="D-isomer_DH_NAD-bd"/>
</dbReference>
<dbReference type="InterPro" id="IPR020921">
    <property type="entry name" value="Erythronate-4-P_DHase"/>
</dbReference>
<dbReference type="InterPro" id="IPR024531">
    <property type="entry name" value="Erythronate-4-P_DHase_dimer"/>
</dbReference>
<dbReference type="InterPro" id="IPR036291">
    <property type="entry name" value="NAD(P)-bd_dom_sf"/>
</dbReference>
<dbReference type="InterPro" id="IPR038251">
    <property type="entry name" value="PdxB_dimer_sf"/>
</dbReference>
<dbReference type="NCBIfam" id="NF001309">
    <property type="entry name" value="PRK00257.1"/>
    <property type="match status" value="1"/>
</dbReference>
<dbReference type="PANTHER" id="PTHR42938">
    <property type="entry name" value="FORMATE DEHYDROGENASE 1"/>
    <property type="match status" value="1"/>
</dbReference>
<dbReference type="PANTHER" id="PTHR42938:SF9">
    <property type="entry name" value="FORMATE DEHYDROGENASE 1"/>
    <property type="match status" value="1"/>
</dbReference>
<dbReference type="Pfam" id="PF00389">
    <property type="entry name" value="2-Hacid_dh"/>
    <property type="match status" value="1"/>
</dbReference>
<dbReference type="Pfam" id="PF02826">
    <property type="entry name" value="2-Hacid_dh_C"/>
    <property type="match status" value="1"/>
</dbReference>
<dbReference type="Pfam" id="PF11890">
    <property type="entry name" value="DUF3410"/>
    <property type="match status" value="1"/>
</dbReference>
<dbReference type="SUPFAM" id="SSF52283">
    <property type="entry name" value="Formate/glycerate dehydrogenase catalytic domain-like"/>
    <property type="match status" value="1"/>
</dbReference>
<dbReference type="SUPFAM" id="SSF51735">
    <property type="entry name" value="NAD(P)-binding Rossmann-fold domains"/>
    <property type="match status" value="1"/>
</dbReference>
<dbReference type="PROSITE" id="PS00671">
    <property type="entry name" value="D_2_HYDROXYACID_DH_3"/>
    <property type="match status" value="1"/>
</dbReference>
<proteinExistence type="inferred from homology"/>
<name>PDXB_PSEE4</name>
<organism>
    <name type="scientific">Pseudomonas entomophila (strain L48)</name>
    <dbReference type="NCBI Taxonomy" id="384676"/>
    <lineage>
        <taxon>Bacteria</taxon>
        <taxon>Pseudomonadati</taxon>
        <taxon>Pseudomonadota</taxon>
        <taxon>Gammaproteobacteria</taxon>
        <taxon>Pseudomonadales</taxon>
        <taxon>Pseudomonadaceae</taxon>
        <taxon>Pseudomonas</taxon>
    </lineage>
</organism>